<accession>C0HK63</accession>
<keyword id="KW-0066">ATP synthesis</keyword>
<keyword id="KW-0138">CF(0)</keyword>
<keyword id="KW-0903">Direct protein sequencing</keyword>
<keyword id="KW-0375">Hydrogen ion transport</keyword>
<keyword id="KW-0406">Ion transport</keyword>
<keyword id="KW-0472">Membrane</keyword>
<keyword id="KW-0496">Mitochondrion</keyword>
<keyword id="KW-0999">Mitochondrion inner membrane</keyword>
<keyword id="KW-0813">Transport</keyword>
<feature type="chain" id="PRO_0000445323" description="ATP synthase subunit g, mitochondrial" evidence="5">
    <location>
        <begin position="1"/>
        <end position="118"/>
    </location>
</feature>
<sequence length="118" mass="13325">ISQYITKAQGFFNQAIYWTKVTVEVSKQIYIREGLAPPSVAEIQQVYQGLYKKALEFAAQPKTSADGLIKVAKSLSKEEYLRFGAYFIQIVGLFSLGEIIGRRQIVGYPSFGPKEHHH</sequence>
<name>ATPN_PICAN</name>
<comment type="function">
    <text evidence="1 3 4">Mitochondrial membrane ATP synthase (F(1)F(0) ATP synthase or Complex V) produces ATP from ADP in the presence of a proton gradient across the membrane which is generated by electron transport complexes of the respiratory chain (PubMed:25759169). F-type ATP synthases consist of two structural domains, F(1) - containing the extramembraneous catalytic core, and F(0) - containing the membrane proton channel, linked together by a central stalk and a peripheral stalk (PubMed:27791192). During catalysis, ATP synthesis in the catalytic domain of F(1) is coupled via a rotary mechanism of the central stalk subunits to proton translocation (By similarity). Part of the complex F(0) domain (By similarity) Minor subunit located with subunit a/ATP6 in the membrane (By similarity). Together with subunit e/TIM11, probably contributes to membrane curvature at the site of the ATP synthase dimer, ultimately contributing to formation of cristae (By similarity).</text>
</comment>
<comment type="subunit">
    <text evidence="1 3 4">F-type ATP synthases have 2 components, the catalytic core F(1) and the membrane-embedded component F(0), linked together by a central stalk and a peripheral stalk (PubMed:27791192). The central stalk, also called rotor shaft, is often seen as part of F(1) (PubMed:27791192). The peripheral stalk is seen as part of F(0). F(0) contains the membrane channel next to the rotor (PubMed:27791192). F-type ATP synthases form dimers but each monomer functions independently in ATP generation (By similarity). The dimer consists of 18 different polypeptides: ATP1 (subunit alpha, part of F(1), 3 molecules per monomer), ATP2 (subunit beta, part of F(1), 3 molecules per monomer), ATP3 (subunit gamma, part of the central stalk), ATP4 (subunit b, part of the peripheral stalk), ATP5/OSCP (subunit 5/OSCP, part of the peripheral stalk), ATP6 (subunit a, part of the peripheral stalk), ATP7 (subunit d, part of the peripheral stalk), ATP8 (subunit 8, part of the peripheral stalk), OLI1 (subunit c, part of the rotor, 10 molecules per monomer), ATP14 (subunit h, part of the peripheral stalk), ATP15 (subunit epsilon, part of the central stalk), ATP16 (subunit delta, part of the central stalk), ATP17 (subunit f, part of the peripheral stalk), ATP18 (subunit i/j, part of the peripheral stalk) (PubMed:25759169, PubMed:27791192). Dimer-specific subunits are ATP19 (subunit k, at interface between monomers), ATP20 (subunit g, at interface between monomers), TIM11 (subunit e, at interface between monomers) (By similarity). Also contains subunit L (PubMed:25759169).</text>
</comment>
<comment type="subcellular location">
    <subcellularLocation>
        <location evidence="9">Mitochondrion inner membrane</location>
    </subcellularLocation>
    <text evidence="9">The F-type ATP synthase complex is anchored in the mitochondrial inner membrane via the F(0) domain with the F(1) domain and the peripheral stalk extending into the mitochondrial matrix.</text>
</comment>
<comment type="mass spectrometry" mass="13324.0" method="MALDI" evidence="3"/>
<comment type="similarity">
    <text evidence="8">Belongs to the ATPase g subunit family.</text>
</comment>
<organism evidence="6">
    <name type="scientific">Pichia angusta</name>
    <name type="common">Yeast</name>
    <name type="synonym">Hansenula polymorpha</name>
    <dbReference type="NCBI Taxonomy" id="870730"/>
    <lineage>
        <taxon>Eukaryota</taxon>
        <taxon>Fungi</taxon>
        <taxon>Dikarya</taxon>
        <taxon>Ascomycota</taxon>
        <taxon>Saccharomycotina</taxon>
        <taxon>Pichiomycetes</taxon>
        <taxon>Pichiales</taxon>
        <taxon>Pichiaceae</taxon>
        <taxon>Ogataea</taxon>
    </lineage>
</organism>
<proteinExistence type="evidence at protein level"/>
<reference evidence="8" key="1">
    <citation type="submission" date="2016-08" db="UniProtKB">
        <authorList>
            <person name="Fearnley I.M."/>
        </authorList>
    </citation>
    <scope>PARTIAL PROTEIN SEQUENCE</scope>
    <source>
        <strain evidence="7">A16 / NCYC 2310</strain>
    </source>
</reference>
<reference evidence="8" key="2">
    <citation type="journal article" date="2015" name="Biochem. J.">
        <title>The purification and characterization of ATP synthase complexes from the mitochondria of four fungal species.</title>
        <authorList>
            <person name="Liu S."/>
            <person name="Charlesworth T.J."/>
            <person name="Bason J.V."/>
            <person name="Montgomery M.G."/>
            <person name="Harbour M.E."/>
            <person name="Fearnley I.M."/>
            <person name="Walker J.E."/>
        </authorList>
    </citation>
    <scope>PROTEIN SEQUENCE OF 1-7</scope>
    <scope>IDENTIFICATION IN ATP SYNTHASE COMPLEX</scope>
    <scope>FUNCTION OF ATPASE COMPLEX</scope>
    <scope>SUBUNIT</scope>
    <scope>SUBCELLULAR LOCATION</scope>
    <scope>MASS SPECTROMETRY</scope>
    <scope>IDENTIFICATION BY MASS SPECTROMETRY</scope>
    <source>
        <strain evidence="6">A16 / NCYC 2310</strain>
    </source>
</reference>
<reference evidence="8" key="3">
    <citation type="journal article" date="2016" name="Proc. Natl. Acad. Sci. U.S.A.">
        <title>Structure of the mitochondrial ATP synthase from Pichia angusta determined by electron cryo-microscopy.</title>
        <authorList>
            <person name="Vinothkumar K.R."/>
            <person name="Montgomery M.G."/>
            <person name="Liu S."/>
            <person name="Walker J.E."/>
        </authorList>
    </citation>
    <scope>STRUCTURE BY ELECTRON MICROSCOPY (7.0 ANGSTROMS) OF MONOMERIC ATP SYNTHASE COMPLEX IN COMPLEX WITH BOVINE ATPIF1</scope>
    <scope>FUNCTION</scope>
    <scope>SUBUNIT</scope>
    <scope>SUBCELLULAR LOCATION</scope>
</reference>
<dbReference type="SMR" id="C0HK63"/>
<dbReference type="GO" id="GO:0005743">
    <property type="term" value="C:mitochondrial inner membrane"/>
    <property type="evidence" value="ECO:0007669"/>
    <property type="project" value="UniProtKB-SubCell"/>
</dbReference>
<dbReference type="GO" id="GO:0045259">
    <property type="term" value="C:proton-transporting ATP synthase complex"/>
    <property type="evidence" value="ECO:0007669"/>
    <property type="project" value="UniProtKB-KW"/>
</dbReference>
<dbReference type="GO" id="GO:0015078">
    <property type="term" value="F:proton transmembrane transporter activity"/>
    <property type="evidence" value="ECO:0007669"/>
    <property type="project" value="InterPro"/>
</dbReference>
<dbReference type="GO" id="GO:0015986">
    <property type="term" value="P:proton motive force-driven ATP synthesis"/>
    <property type="evidence" value="ECO:0007669"/>
    <property type="project" value="InterPro"/>
</dbReference>
<dbReference type="InterPro" id="IPR006808">
    <property type="entry name" value="ATP_synth_F0_gsu_mt"/>
</dbReference>
<dbReference type="Pfam" id="PF04718">
    <property type="entry name" value="ATP-synt_G"/>
    <property type="match status" value="1"/>
</dbReference>
<protein>
    <recommendedName>
        <fullName evidence="2">ATP synthase subunit g, mitochondrial</fullName>
        <shortName evidence="2">ATPase subunit g</shortName>
    </recommendedName>
</protein>
<gene>
    <name evidence="2" type="primary">ATP20</name>
</gene>
<evidence type="ECO:0000250" key="1">
    <source>
        <dbReference type="UniProtKB" id="B5FVB8"/>
    </source>
</evidence>
<evidence type="ECO:0000250" key="2">
    <source>
        <dbReference type="UniProtKB" id="Q12233"/>
    </source>
</evidence>
<evidence type="ECO:0000269" key="3">
    <source>
    </source>
</evidence>
<evidence type="ECO:0000269" key="4">
    <source>
    </source>
</evidence>
<evidence type="ECO:0000269" key="5">
    <source ref="1"/>
</evidence>
<evidence type="ECO:0000303" key="6">
    <source>
    </source>
</evidence>
<evidence type="ECO:0000303" key="7">
    <source ref="1"/>
</evidence>
<evidence type="ECO:0000305" key="8"/>
<evidence type="ECO:0000305" key="9">
    <source>
    </source>
</evidence>